<comment type="function">
    <text evidence="1">Catalyzes the formation of N(7)-methylguanine at position 46 (m7G46) in tRNA.</text>
</comment>
<comment type="catalytic activity">
    <reaction evidence="1">
        <text>guanosine(46) in tRNA + S-adenosyl-L-methionine = N(7)-methylguanosine(46) in tRNA + S-adenosyl-L-homocysteine</text>
        <dbReference type="Rhea" id="RHEA:42708"/>
        <dbReference type="Rhea" id="RHEA-COMP:10188"/>
        <dbReference type="Rhea" id="RHEA-COMP:10189"/>
        <dbReference type="ChEBI" id="CHEBI:57856"/>
        <dbReference type="ChEBI" id="CHEBI:59789"/>
        <dbReference type="ChEBI" id="CHEBI:74269"/>
        <dbReference type="ChEBI" id="CHEBI:74480"/>
        <dbReference type="EC" id="2.1.1.33"/>
    </reaction>
</comment>
<comment type="pathway">
    <text evidence="1">tRNA modification; N(7)-methylguanine-tRNA biosynthesis.</text>
</comment>
<comment type="similarity">
    <text evidence="1">Belongs to the class I-like SAM-binding methyltransferase superfamily. TrmB family.</text>
</comment>
<name>TRMB_CLOAB</name>
<organism>
    <name type="scientific">Clostridium acetobutylicum (strain ATCC 824 / DSM 792 / JCM 1419 / IAM 19013 / LMG 5710 / NBRC 13948 / NRRL B-527 / VKM B-1787 / 2291 / W)</name>
    <dbReference type="NCBI Taxonomy" id="272562"/>
    <lineage>
        <taxon>Bacteria</taxon>
        <taxon>Bacillati</taxon>
        <taxon>Bacillota</taxon>
        <taxon>Clostridia</taxon>
        <taxon>Eubacteriales</taxon>
        <taxon>Clostridiaceae</taxon>
        <taxon>Clostridium</taxon>
    </lineage>
</organism>
<dbReference type="EC" id="2.1.1.33" evidence="1"/>
<dbReference type="EMBL" id="AE001437">
    <property type="protein sequence ID" value="AAK80574.1"/>
    <property type="molecule type" value="Genomic_DNA"/>
</dbReference>
<dbReference type="PIR" id="C97223">
    <property type="entry name" value="C97223"/>
</dbReference>
<dbReference type="RefSeq" id="NP_349234.1">
    <property type="nucleotide sequence ID" value="NC_003030.1"/>
</dbReference>
<dbReference type="RefSeq" id="WP_010965915.1">
    <property type="nucleotide sequence ID" value="NC_003030.1"/>
</dbReference>
<dbReference type="SMR" id="Q97FU9"/>
<dbReference type="STRING" id="272562.CA_C2627"/>
<dbReference type="GeneID" id="44999095"/>
<dbReference type="KEGG" id="cac:CA_C2627"/>
<dbReference type="PATRIC" id="fig|272562.8.peg.2816"/>
<dbReference type="eggNOG" id="COG0220">
    <property type="taxonomic scope" value="Bacteria"/>
</dbReference>
<dbReference type="HOGENOM" id="CLU_050910_2_1_9"/>
<dbReference type="OrthoDB" id="9802090at2"/>
<dbReference type="UniPathway" id="UPA00989"/>
<dbReference type="Proteomes" id="UP000000814">
    <property type="component" value="Chromosome"/>
</dbReference>
<dbReference type="GO" id="GO:0043527">
    <property type="term" value="C:tRNA methyltransferase complex"/>
    <property type="evidence" value="ECO:0007669"/>
    <property type="project" value="TreeGrafter"/>
</dbReference>
<dbReference type="GO" id="GO:0008176">
    <property type="term" value="F:tRNA (guanine(46)-N7)-methyltransferase activity"/>
    <property type="evidence" value="ECO:0007669"/>
    <property type="project" value="UniProtKB-UniRule"/>
</dbReference>
<dbReference type="CDD" id="cd02440">
    <property type="entry name" value="AdoMet_MTases"/>
    <property type="match status" value="1"/>
</dbReference>
<dbReference type="Gene3D" id="3.40.50.150">
    <property type="entry name" value="Vaccinia Virus protein VP39"/>
    <property type="match status" value="1"/>
</dbReference>
<dbReference type="HAMAP" id="MF_01057">
    <property type="entry name" value="tRNA_methyltr_TrmB"/>
    <property type="match status" value="1"/>
</dbReference>
<dbReference type="InterPro" id="IPR029063">
    <property type="entry name" value="SAM-dependent_MTases_sf"/>
</dbReference>
<dbReference type="InterPro" id="IPR003358">
    <property type="entry name" value="tRNA_(Gua-N-7)_MeTrfase_Trmb"/>
</dbReference>
<dbReference type="InterPro" id="IPR055361">
    <property type="entry name" value="tRNA_methyltr_TrmB_bact"/>
</dbReference>
<dbReference type="NCBIfam" id="NF001080">
    <property type="entry name" value="PRK00121.2-2"/>
    <property type="match status" value="1"/>
</dbReference>
<dbReference type="NCBIfam" id="TIGR00091">
    <property type="entry name" value="tRNA (guanosine(46)-N7)-methyltransferase TrmB"/>
    <property type="match status" value="1"/>
</dbReference>
<dbReference type="PANTHER" id="PTHR23417">
    <property type="entry name" value="3-DEOXY-D-MANNO-OCTULOSONIC-ACID TRANSFERASE/TRNA GUANINE-N 7 - -METHYLTRANSFERASE"/>
    <property type="match status" value="1"/>
</dbReference>
<dbReference type="PANTHER" id="PTHR23417:SF14">
    <property type="entry name" value="PENTACOTRIPEPTIDE-REPEAT REGION OF PRORP DOMAIN-CONTAINING PROTEIN"/>
    <property type="match status" value="1"/>
</dbReference>
<dbReference type="Pfam" id="PF02390">
    <property type="entry name" value="Methyltransf_4"/>
    <property type="match status" value="1"/>
</dbReference>
<dbReference type="SUPFAM" id="SSF53335">
    <property type="entry name" value="S-adenosyl-L-methionine-dependent methyltransferases"/>
    <property type="match status" value="1"/>
</dbReference>
<dbReference type="PROSITE" id="PS51625">
    <property type="entry name" value="SAM_MT_TRMB"/>
    <property type="match status" value="1"/>
</dbReference>
<gene>
    <name evidence="1" type="primary">trmB</name>
    <name type="ordered locus">CA_C2627</name>
</gene>
<protein>
    <recommendedName>
        <fullName evidence="1">tRNA (guanine-N(7)-)-methyltransferase</fullName>
        <ecNumber evidence="1">2.1.1.33</ecNumber>
    </recommendedName>
    <alternativeName>
        <fullName evidence="1">tRNA (guanine(46)-N(7))-methyltransferase</fullName>
    </alternativeName>
    <alternativeName>
        <fullName evidence="1">tRNA(m7G46)-methyltransferase</fullName>
    </alternativeName>
</protein>
<keyword id="KW-0489">Methyltransferase</keyword>
<keyword id="KW-1185">Reference proteome</keyword>
<keyword id="KW-0949">S-adenosyl-L-methionine</keyword>
<keyword id="KW-0808">Transferase</keyword>
<keyword id="KW-0819">tRNA processing</keyword>
<accession>Q97FU9</accession>
<evidence type="ECO:0000255" key="1">
    <source>
        <dbReference type="HAMAP-Rule" id="MF_01057"/>
    </source>
</evidence>
<feature type="chain" id="PRO_0000171319" description="tRNA (guanine-N(7)-)-methyltransferase">
    <location>
        <begin position="1"/>
        <end position="211"/>
    </location>
</feature>
<feature type="binding site" evidence="1">
    <location>
        <position position="43"/>
    </location>
    <ligand>
        <name>S-adenosyl-L-methionine</name>
        <dbReference type="ChEBI" id="CHEBI:59789"/>
    </ligand>
</feature>
<feature type="binding site" evidence="1">
    <location>
        <position position="68"/>
    </location>
    <ligand>
        <name>S-adenosyl-L-methionine</name>
        <dbReference type="ChEBI" id="CHEBI:59789"/>
    </ligand>
</feature>
<feature type="binding site" evidence="1">
    <location>
        <position position="117"/>
    </location>
    <ligand>
        <name>S-adenosyl-L-methionine</name>
        <dbReference type="ChEBI" id="CHEBI:59789"/>
    </ligand>
</feature>
<feature type="binding site" evidence="1">
    <location>
        <position position="121"/>
    </location>
    <ligand>
        <name>substrate</name>
    </ligand>
</feature>
<feature type="binding site" evidence="1">
    <location>
        <position position="153"/>
    </location>
    <ligand>
        <name>substrate</name>
    </ligand>
</feature>
<feature type="binding site" evidence="1">
    <location>
        <begin position="190"/>
        <end position="193"/>
    </location>
    <ligand>
        <name>substrate</name>
    </ligand>
</feature>
<proteinExistence type="inferred from homology"/>
<sequence>MRLRKKWWARPEMEASPLCIVNPKDYKGKWREEFKNDNEIYLELGCGRGDFVTNIANKHPEKNYVAIDLKDEVIAIALRKITESEVQNVRIAPLQIAFINEVFDKDEIARIYINFCNPWPKDRHKKRRLTHTKFLTKYKEFLKPNSQIWFKTDDDGLFVESLDYFKECGFQIKFMTYDLHKSGFDKNIVTEYESKFLKLGINIKFLIAELK</sequence>
<reference key="1">
    <citation type="journal article" date="2001" name="J. Bacteriol.">
        <title>Genome sequence and comparative analysis of the solvent-producing bacterium Clostridium acetobutylicum.</title>
        <authorList>
            <person name="Noelling J."/>
            <person name="Breton G."/>
            <person name="Omelchenko M.V."/>
            <person name="Makarova K.S."/>
            <person name="Zeng Q."/>
            <person name="Gibson R."/>
            <person name="Lee H.M."/>
            <person name="Dubois J."/>
            <person name="Qiu D."/>
            <person name="Hitti J."/>
            <person name="Wolf Y.I."/>
            <person name="Tatusov R.L."/>
            <person name="Sabathe F."/>
            <person name="Doucette-Stamm L.A."/>
            <person name="Soucaille P."/>
            <person name="Daly M.J."/>
            <person name="Bennett G.N."/>
            <person name="Koonin E.V."/>
            <person name="Smith D.R."/>
        </authorList>
    </citation>
    <scope>NUCLEOTIDE SEQUENCE [LARGE SCALE GENOMIC DNA]</scope>
    <source>
        <strain>ATCC 824 / DSM 792 / JCM 1419 / IAM 19013 / LMG 5710 / NBRC 13948 / NRRL B-527 / VKM B-1787 / 2291 / W</strain>
    </source>
</reference>